<name>S52A2_PIG</name>
<feature type="chain" id="PRO_0000042635" description="Solute carrier family 52, riboflavin transporter, member 2">
    <location>
        <begin position="1"/>
        <end position="446"/>
    </location>
</feature>
<feature type="transmembrane region" description="Helical" evidence="2">
    <location>
        <begin position="14"/>
        <end position="34"/>
    </location>
</feature>
<feature type="transmembrane region" description="Helical" evidence="2">
    <location>
        <begin position="47"/>
        <end position="67"/>
    </location>
</feature>
<feature type="transmembrane region" description="Helical" evidence="2">
    <location>
        <begin position="79"/>
        <end position="99"/>
    </location>
</feature>
<feature type="transmembrane region" description="Helical" evidence="2">
    <location>
        <begin position="104"/>
        <end position="124"/>
    </location>
</feature>
<feature type="transmembrane region" description="Helical" evidence="2">
    <location>
        <begin position="147"/>
        <end position="167"/>
    </location>
</feature>
<feature type="transmembrane region" description="Helical" evidence="2">
    <location>
        <begin position="196"/>
        <end position="216"/>
    </location>
</feature>
<feature type="transmembrane region" description="Helical" evidence="2">
    <location>
        <begin position="278"/>
        <end position="298"/>
    </location>
</feature>
<feature type="transmembrane region" description="Helical" evidence="2">
    <location>
        <begin position="313"/>
        <end position="333"/>
    </location>
</feature>
<feature type="transmembrane region" description="Helical" evidence="2">
    <location>
        <begin position="340"/>
        <end position="360"/>
    </location>
</feature>
<feature type="transmembrane region" description="Helical" evidence="2">
    <location>
        <begin position="367"/>
        <end position="387"/>
    </location>
</feature>
<feature type="transmembrane region" description="Helical" evidence="2">
    <location>
        <begin position="405"/>
        <end position="425"/>
    </location>
</feature>
<feature type="region of interest" description="Disordered" evidence="3">
    <location>
        <begin position="228"/>
        <end position="267"/>
    </location>
</feature>
<feature type="compositionally biased region" description="Gly residues" evidence="3">
    <location>
        <begin position="229"/>
        <end position="238"/>
    </location>
</feature>
<feature type="compositionally biased region" description="Polar residues" evidence="3">
    <location>
        <begin position="254"/>
        <end position="263"/>
    </location>
</feature>
<feature type="glycosylation site" description="N-linked (GlcNAc...) asparagine" evidence="2">
    <location>
        <position position="129"/>
    </location>
</feature>
<organism>
    <name type="scientific">Sus scrofa</name>
    <name type="common">Pig</name>
    <dbReference type="NCBI Taxonomy" id="9823"/>
    <lineage>
        <taxon>Eukaryota</taxon>
        <taxon>Metazoa</taxon>
        <taxon>Chordata</taxon>
        <taxon>Craniata</taxon>
        <taxon>Vertebrata</taxon>
        <taxon>Euteleostomi</taxon>
        <taxon>Mammalia</taxon>
        <taxon>Eutheria</taxon>
        <taxon>Laurasiatheria</taxon>
        <taxon>Artiodactyla</taxon>
        <taxon>Suina</taxon>
        <taxon>Suidae</taxon>
        <taxon>Sus</taxon>
    </lineage>
</organism>
<protein>
    <recommendedName>
        <fullName>Solute carrier family 52, riboflavin transporter, member 2</fullName>
    </recommendedName>
    <alternativeName>
        <fullName>Endogenous retrovirus A receptor</fullName>
    </alternativeName>
    <alternativeName>
        <fullName>Protein GPR172B</fullName>
    </alternativeName>
    <alternativeName>
        <fullName>Riboflavin transporter 1</fullName>
    </alternativeName>
</protein>
<comment type="function">
    <text evidence="1">Plasma membrane transporter mediating the uptake by cells of the water soluble vitamin B2/riboflavin that plays a key role in biochemical oxidation-reduction reactions of the carbohydrate, lipid, and amino acid metabolism. May also act as a receptor for 4-hydroxybutyrate.</text>
</comment>
<comment type="function">
    <text evidence="4">(Microbial infection) In case of infection by porcine endogenous retrovirus (PERV-A), acts as a cell receptor to retroviral envelopes.</text>
</comment>
<comment type="catalytic activity">
    <reaction evidence="1">
        <text>riboflavin(in) = riboflavin(out)</text>
        <dbReference type="Rhea" id="RHEA:35015"/>
        <dbReference type="ChEBI" id="CHEBI:57986"/>
    </reaction>
</comment>
<comment type="activity regulation">
    <text evidence="1">Riboflavin transport is Na(+)-independent but moderately pH-sensitive (By similarity). Activity is strongly inhibited by riboflavin analogs, such as lumiflavin (By similarity). Weakly inhibited by flavin adenine dinucleotide (FAD) and flavin mononucleotide (FMN) (By similarity).</text>
</comment>
<comment type="subcellular location">
    <subcellularLocation>
        <location evidence="1">Cell membrane</location>
        <topology evidence="2">Multi-pass membrane protein</topology>
    </subcellularLocation>
</comment>
<comment type="similarity">
    <text evidence="5">Belongs to the riboflavin transporter family.</text>
</comment>
<gene>
    <name type="primary">SLC52A2</name>
    <name type="synonym">GPR172B</name>
    <name type="synonym">RFT1</name>
</gene>
<proteinExistence type="evidence at protein level"/>
<keyword id="KW-1003">Cell membrane</keyword>
<keyword id="KW-0325">Glycoprotein</keyword>
<keyword id="KW-1183">Host cell receptor for virus entry</keyword>
<keyword id="KW-0472">Membrane</keyword>
<keyword id="KW-0675">Receptor</keyword>
<keyword id="KW-1185">Reference proteome</keyword>
<keyword id="KW-0812">Transmembrane</keyword>
<keyword id="KW-1133">Transmembrane helix</keyword>
<keyword id="KW-0813">Transport</keyword>
<reference key="1">
    <citation type="journal article" date="2003" name="Proc. Natl. Acad. Sci. U.S.A.">
        <title>Identification of receptors for pig endogenous retrovirus.</title>
        <authorList>
            <person name="Ericsson T.A."/>
            <person name="Takeuchi Y."/>
            <person name="Templin C."/>
            <person name="Quinn G."/>
            <person name="Farhadian S.F."/>
            <person name="Wood J.C."/>
            <person name="Oldmixon B.A."/>
            <person name="Suling K.M."/>
            <person name="Ishii J.K."/>
            <person name="Kitagawa Y."/>
            <person name="Miyazawa T."/>
            <person name="Salomon D.R."/>
            <person name="Weiss R.A."/>
            <person name="Patience C."/>
        </authorList>
    </citation>
    <scope>NUCLEOTIDE SEQUENCE [MRNA]</scope>
    <scope>FUNCTION AS A VIRAL RECEPTOR</scope>
</reference>
<dbReference type="EMBL" id="AY134475">
    <property type="protein sequence ID" value="AAM95457.1"/>
    <property type="molecule type" value="mRNA"/>
</dbReference>
<dbReference type="RefSeq" id="NP_001004033.1">
    <property type="nucleotide sequence ID" value="NM_001004033.1"/>
</dbReference>
<dbReference type="SMR" id="Q863Y7"/>
<dbReference type="FunCoup" id="Q863Y7">
    <property type="interactions" value="370"/>
</dbReference>
<dbReference type="STRING" id="9823.ENSSSCP00000006317"/>
<dbReference type="GlyCosmos" id="Q863Y7">
    <property type="glycosylation" value="1 site, No reported glycans"/>
</dbReference>
<dbReference type="GlyGen" id="Q863Y7">
    <property type="glycosylation" value="2 sites"/>
</dbReference>
<dbReference type="PaxDb" id="9823-ENSSSCP00000006317"/>
<dbReference type="GeneID" id="445519"/>
<dbReference type="KEGG" id="ssc:445519"/>
<dbReference type="CTD" id="79581"/>
<dbReference type="eggNOG" id="KOG4255">
    <property type="taxonomic scope" value="Eukaryota"/>
</dbReference>
<dbReference type="InParanoid" id="Q863Y7"/>
<dbReference type="OrthoDB" id="9995836at2759"/>
<dbReference type="Proteomes" id="UP000008227">
    <property type="component" value="Unplaced"/>
</dbReference>
<dbReference type="Proteomes" id="UP000314985">
    <property type="component" value="Unplaced"/>
</dbReference>
<dbReference type="Proteomes" id="UP000694570">
    <property type="component" value="Unplaced"/>
</dbReference>
<dbReference type="Proteomes" id="UP000694571">
    <property type="component" value="Unplaced"/>
</dbReference>
<dbReference type="Proteomes" id="UP000694720">
    <property type="component" value="Unplaced"/>
</dbReference>
<dbReference type="Proteomes" id="UP000694722">
    <property type="component" value="Unplaced"/>
</dbReference>
<dbReference type="Proteomes" id="UP000694723">
    <property type="component" value="Unplaced"/>
</dbReference>
<dbReference type="Proteomes" id="UP000694724">
    <property type="component" value="Unplaced"/>
</dbReference>
<dbReference type="Proteomes" id="UP000694725">
    <property type="component" value="Unplaced"/>
</dbReference>
<dbReference type="Proteomes" id="UP000694726">
    <property type="component" value="Unplaced"/>
</dbReference>
<dbReference type="Proteomes" id="UP000694727">
    <property type="component" value="Unplaced"/>
</dbReference>
<dbReference type="Proteomes" id="UP000694728">
    <property type="component" value="Unplaced"/>
</dbReference>
<dbReference type="GO" id="GO:0005886">
    <property type="term" value="C:plasma membrane"/>
    <property type="evidence" value="ECO:0000250"/>
    <property type="project" value="UniProtKB"/>
</dbReference>
<dbReference type="GO" id="GO:0062124">
    <property type="term" value="F:4-hydroxybutyrate receptor activity"/>
    <property type="evidence" value="ECO:0000250"/>
    <property type="project" value="UniProtKB"/>
</dbReference>
<dbReference type="GO" id="GO:0032217">
    <property type="term" value="F:riboflavin transmembrane transporter activity"/>
    <property type="evidence" value="ECO:0000250"/>
    <property type="project" value="UniProtKB"/>
</dbReference>
<dbReference type="GO" id="GO:0001618">
    <property type="term" value="F:virus receptor activity"/>
    <property type="evidence" value="ECO:0007669"/>
    <property type="project" value="UniProtKB-KW"/>
</dbReference>
<dbReference type="GO" id="GO:0032218">
    <property type="term" value="P:riboflavin transport"/>
    <property type="evidence" value="ECO:0000250"/>
    <property type="project" value="UniProtKB"/>
</dbReference>
<dbReference type="InterPro" id="IPR009357">
    <property type="entry name" value="Riboflavin_transptr"/>
</dbReference>
<dbReference type="PANTHER" id="PTHR12929">
    <property type="entry name" value="SOLUTE CARRIER FAMILY 52"/>
    <property type="match status" value="1"/>
</dbReference>
<dbReference type="PANTHER" id="PTHR12929:SF1">
    <property type="entry name" value="SOLUTE CARRIER FAMILY 52, RIBOFLAVIN TRANSPORTER, MEMBER 2"/>
    <property type="match status" value="1"/>
</dbReference>
<dbReference type="Pfam" id="PF06237">
    <property type="entry name" value="SLC52_ribofla_tr"/>
    <property type="match status" value="1"/>
</dbReference>
<sequence>MAAPTLARLVLTHLLVALFGMGSWAAINGIWVELPVVVKDLPEGWSLPSYLSVLVALGNLGLLVVTLWRRLAPGKGERAPIQVVQALSVVGTALLAPLWQHLTVMAGQVHSVAFLALTFVLALACCASNVTYLPFLSRLPPPFLRSFFLGQGLSALLPCVLALGQGVGRLECPPAPANGTPGPPLDFPERFSASAFFGALTALLVISAAAFQGLLLLLPSLVSIPTEGSGTGLRGGAPGVEEEEEEEASPLQEPPSQAAGNTPSPDPAAHRLLSARGACLLGLLATTSALTNGVLPAVQSYSSLPYGRLAYHLAVVLGSASNPLACFLAMGILCRSLAGLGGLSLLGTLFGAYLMALAILSPCPPLVGTSAGMVLVVVLWALCLGVFSYVKVATSSLLHGGGPPALLAAGVAIQVGSLLGAVTMFPPTSIYRVFQSRKDCVDPCEP</sequence>
<evidence type="ECO:0000250" key="1">
    <source>
        <dbReference type="UniProtKB" id="Q9HAB3"/>
    </source>
</evidence>
<evidence type="ECO:0000255" key="2"/>
<evidence type="ECO:0000256" key="3">
    <source>
        <dbReference type="SAM" id="MobiDB-lite"/>
    </source>
</evidence>
<evidence type="ECO:0000269" key="4">
    <source>
    </source>
</evidence>
<evidence type="ECO:0000305" key="5"/>
<accession>Q863Y7</accession>